<organism>
    <name type="scientific">Bartonella tribocorum (strain CIP 105476 / IBS 506)</name>
    <dbReference type="NCBI Taxonomy" id="382640"/>
    <lineage>
        <taxon>Bacteria</taxon>
        <taxon>Pseudomonadati</taxon>
        <taxon>Pseudomonadota</taxon>
        <taxon>Alphaproteobacteria</taxon>
        <taxon>Hyphomicrobiales</taxon>
        <taxon>Bartonellaceae</taxon>
        <taxon>Bartonella</taxon>
    </lineage>
</organism>
<dbReference type="EC" id="3.1.21.10" evidence="1"/>
<dbReference type="EMBL" id="AM260525">
    <property type="protein sequence ID" value="CAK02382.1"/>
    <property type="status" value="ALT_INIT"/>
    <property type="molecule type" value="Genomic_DNA"/>
</dbReference>
<dbReference type="RefSeq" id="WP_038474282.1">
    <property type="nucleotide sequence ID" value="NC_010161.1"/>
</dbReference>
<dbReference type="SMR" id="A9IYK9"/>
<dbReference type="KEGG" id="btr:BT_2377"/>
<dbReference type="eggNOG" id="COG0817">
    <property type="taxonomic scope" value="Bacteria"/>
</dbReference>
<dbReference type="HOGENOM" id="CLU_091257_3_1_5"/>
<dbReference type="Proteomes" id="UP000001592">
    <property type="component" value="Chromosome"/>
</dbReference>
<dbReference type="GO" id="GO:0005737">
    <property type="term" value="C:cytoplasm"/>
    <property type="evidence" value="ECO:0007669"/>
    <property type="project" value="UniProtKB-SubCell"/>
</dbReference>
<dbReference type="GO" id="GO:0048476">
    <property type="term" value="C:Holliday junction resolvase complex"/>
    <property type="evidence" value="ECO:0007669"/>
    <property type="project" value="UniProtKB-UniRule"/>
</dbReference>
<dbReference type="GO" id="GO:0008821">
    <property type="term" value="F:crossover junction DNA endonuclease activity"/>
    <property type="evidence" value="ECO:0007669"/>
    <property type="project" value="UniProtKB-UniRule"/>
</dbReference>
<dbReference type="GO" id="GO:0003677">
    <property type="term" value="F:DNA binding"/>
    <property type="evidence" value="ECO:0007669"/>
    <property type="project" value="UniProtKB-KW"/>
</dbReference>
<dbReference type="GO" id="GO:0000287">
    <property type="term" value="F:magnesium ion binding"/>
    <property type="evidence" value="ECO:0007669"/>
    <property type="project" value="UniProtKB-UniRule"/>
</dbReference>
<dbReference type="GO" id="GO:0006310">
    <property type="term" value="P:DNA recombination"/>
    <property type="evidence" value="ECO:0007669"/>
    <property type="project" value="UniProtKB-UniRule"/>
</dbReference>
<dbReference type="GO" id="GO:0006281">
    <property type="term" value="P:DNA repair"/>
    <property type="evidence" value="ECO:0007669"/>
    <property type="project" value="UniProtKB-UniRule"/>
</dbReference>
<dbReference type="CDD" id="cd16962">
    <property type="entry name" value="RuvC"/>
    <property type="match status" value="1"/>
</dbReference>
<dbReference type="FunFam" id="3.30.420.10:FF:000002">
    <property type="entry name" value="Crossover junction endodeoxyribonuclease RuvC"/>
    <property type="match status" value="1"/>
</dbReference>
<dbReference type="Gene3D" id="3.30.420.10">
    <property type="entry name" value="Ribonuclease H-like superfamily/Ribonuclease H"/>
    <property type="match status" value="1"/>
</dbReference>
<dbReference type="HAMAP" id="MF_00034">
    <property type="entry name" value="RuvC"/>
    <property type="match status" value="1"/>
</dbReference>
<dbReference type="InterPro" id="IPR012337">
    <property type="entry name" value="RNaseH-like_sf"/>
</dbReference>
<dbReference type="InterPro" id="IPR036397">
    <property type="entry name" value="RNaseH_sf"/>
</dbReference>
<dbReference type="InterPro" id="IPR020563">
    <property type="entry name" value="X-over_junc_endoDNase_Mg_BS"/>
</dbReference>
<dbReference type="InterPro" id="IPR002176">
    <property type="entry name" value="X-over_junc_endoDNase_RuvC"/>
</dbReference>
<dbReference type="NCBIfam" id="TIGR00228">
    <property type="entry name" value="ruvC"/>
    <property type="match status" value="1"/>
</dbReference>
<dbReference type="PANTHER" id="PTHR30194">
    <property type="entry name" value="CROSSOVER JUNCTION ENDODEOXYRIBONUCLEASE RUVC"/>
    <property type="match status" value="1"/>
</dbReference>
<dbReference type="PANTHER" id="PTHR30194:SF3">
    <property type="entry name" value="CROSSOVER JUNCTION ENDODEOXYRIBONUCLEASE RUVC"/>
    <property type="match status" value="1"/>
</dbReference>
<dbReference type="Pfam" id="PF02075">
    <property type="entry name" value="RuvC"/>
    <property type="match status" value="1"/>
</dbReference>
<dbReference type="PRINTS" id="PR00696">
    <property type="entry name" value="RSOLVASERUVC"/>
</dbReference>
<dbReference type="SUPFAM" id="SSF53098">
    <property type="entry name" value="Ribonuclease H-like"/>
    <property type="match status" value="1"/>
</dbReference>
<dbReference type="PROSITE" id="PS01321">
    <property type="entry name" value="RUVC"/>
    <property type="match status" value="1"/>
</dbReference>
<keyword id="KW-0963">Cytoplasm</keyword>
<keyword id="KW-0227">DNA damage</keyword>
<keyword id="KW-0233">DNA recombination</keyword>
<keyword id="KW-0234">DNA repair</keyword>
<keyword id="KW-0238">DNA-binding</keyword>
<keyword id="KW-0255">Endonuclease</keyword>
<keyword id="KW-0378">Hydrolase</keyword>
<keyword id="KW-0460">Magnesium</keyword>
<keyword id="KW-0479">Metal-binding</keyword>
<keyword id="KW-0540">Nuclease</keyword>
<protein>
    <recommendedName>
        <fullName evidence="1">Crossover junction endodeoxyribonuclease RuvC</fullName>
        <ecNumber evidence="1">3.1.21.10</ecNumber>
    </recommendedName>
    <alternativeName>
        <fullName evidence="1">Holliday junction nuclease RuvC</fullName>
    </alternativeName>
    <alternativeName>
        <fullName evidence="1">Holliday junction resolvase RuvC</fullName>
    </alternativeName>
</protein>
<accession>A9IYK9</accession>
<sequence length="171" mass="18596">MAETIRIIGIDPGLRYTGWGVIDLAGNRLQFVAAGTVSSDVQCDLASRLCQIHKGLSEVVHQFMPHEAAVEHVFVNKDATATLKLGQARAIALLVPAQANCPVFEYAPNKVKKSVIGVGHGAKEQIHMMVKVLLPRAEFDSNDAADALALALCHSMHRKRIDQSYQARMAI</sequence>
<reference key="1">
    <citation type="journal article" date="2007" name="Nat. Genet.">
        <title>Genomic analysis of Bartonella identifies type IV secretion systems as host adaptability factors.</title>
        <authorList>
            <person name="Saenz H.L."/>
            <person name="Engel P."/>
            <person name="Stoeckli M.C."/>
            <person name="Lanz C."/>
            <person name="Raddatz G."/>
            <person name="Vayssier-Taussat M."/>
            <person name="Birtles R."/>
            <person name="Schuster S.C."/>
            <person name="Dehio C."/>
        </authorList>
    </citation>
    <scope>NUCLEOTIDE SEQUENCE [LARGE SCALE GENOMIC DNA]</scope>
    <source>
        <strain>CIP 105476 / IBS 506</strain>
    </source>
</reference>
<gene>
    <name evidence="1" type="primary">ruvC</name>
    <name type="ordered locus">BT_2377</name>
</gene>
<proteinExistence type="inferred from homology"/>
<feature type="chain" id="PRO_0000332411" description="Crossover junction endodeoxyribonuclease RuvC">
    <location>
        <begin position="1"/>
        <end position="171"/>
    </location>
</feature>
<feature type="active site" evidence="1">
    <location>
        <position position="11"/>
    </location>
</feature>
<feature type="active site" evidence="1">
    <location>
        <position position="71"/>
    </location>
</feature>
<feature type="active site" evidence="1">
    <location>
        <position position="143"/>
    </location>
</feature>
<feature type="binding site" evidence="1">
    <location>
        <position position="11"/>
    </location>
    <ligand>
        <name>Mg(2+)</name>
        <dbReference type="ChEBI" id="CHEBI:18420"/>
        <label>1</label>
    </ligand>
</feature>
<feature type="binding site" evidence="1">
    <location>
        <position position="71"/>
    </location>
    <ligand>
        <name>Mg(2+)</name>
        <dbReference type="ChEBI" id="CHEBI:18420"/>
        <label>2</label>
    </ligand>
</feature>
<feature type="binding site" evidence="1">
    <location>
        <position position="143"/>
    </location>
    <ligand>
        <name>Mg(2+)</name>
        <dbReference type="ChEBI" id="CHEBI:18420"/>
        <label>1</label>
    </ligand>
</feature>
<name>RUVC_BART1</name>
<evidence type="ECO:0000255" key="1">
    <source>
        <dbReference type="HAMAP-Rule" id="MF_00034"/>
    </source>
</evidence>
<evidence type="ECO:0000305" key="2"/>
<comment type="function">
    <text evidence="1">The RuvA-RuvB-RuvC complex processes Holliday junction (HJ) DNA during genetic recombination and DNA repair. Endonuclease that resolves HJ intermediates. Cleaves cruciform DNA by making single-stranded nicks across the HJ at symmetrical positions within the homologous arms, yielding a 5'-phosphate and a 3'-hydroxyl group; requires a central core of homology in the junction. The consensus cleavage sequence is 5'-(A/T)TT(C/G)-3'. Cleavage occurs on the 3'-side of the TT dinucleotide at the point of strand exchange. HJ branch migration catalyzed by RuvA-RuvB allows RuvC to scan DNA until it finds its consensus sequence, where it cleaves and resolves the cruciform DNA.</text>
</comment>
<comment type="catalytic activity">
    <reaction evidence="1">
        <text>Endonucleolytic cleavage at a junction such as a reciprocal single-stranded crossover between two homologous DNA duplexes (Holliday junction).</text>
        <dbReference type="EC" id="3.1.21.10"/>
    </reaction>
</comment>
<comment type="cofactor">
    <cofactor evidence="1">
        <name>Mg(2+)</name>
        <dbReference type="ChEBI" id="CHEBI:18420"/>
    </cofactor>
    <text evidence="1">Binds 2 Mg(2+) ion per subunit.</text>
</comment>
<comment type="subunit">
    <text evidence="1">Homodimer which binds Holliday junction (HJ) DNA. The HJ becomes 2-fold symmetrical on binding to RuvC with unstacked arms; it has a different conformation from HJ DNA in complex with RuvA. In the full resolvosome a probable DNA-RuvA(4)-RuvB(12)-RuvC(2) complex forms which resolves the HJ.</text>
</comment>
<comment type="subcellular location">
    <subcellularLocation>
        <location evidence="1">Cytoplasm</location>
    </subcellularLocation>
</comment>
<comment type="similarity">
    <text evidence="1">Belongs to the RuvC family.</text>
</comment>
<comment type="sequence caution" evidence="2">
    <conflict type="erroneous initiation">
        <sequence resource="EMBL-CDS" id="CAK02382"/>
    </conflict>
    <text>Extended N-terminus.</text>
</comment>